<keyword id="KW-0320">Glycogen biosynthesis</keyword>
<keyword id="KW-0328">Glycosyltransferase</keyword>
<keyword id="KW-1185">Reference proteome</keyword>
<keyword id="KW-0808">Transferase</keyword>
<feature type="chain" id="PRO_0000230245" description="Glycogen synthase 1">
    <location>
        <begin position="1"/>
        <end position="493"/>
    </location>
</feature>
<feature type="binding site" evidence="1">
    <location>
        <position position="15"/>
    </location>
    <ligand>
        <name>ADP-alpha-D-glucose</name>
        <dbReference type="ChEBI" id="CHEBI:57498"/>
    </ligand>
</feature>
<dbReference type="EC" id="2.4.1.21" evidence="1"/>
<dbReference type="EMBL" id="AE017282">
    <property type="protein sequence ID" value="AAU92508.1"/>
    <property type="molecule type" value="Genomic_DNA"/>
</dbReference>
<dbReference type="RefSeq" id="WP_010960752.1">
    <property type="nucleotide sequence ID" value="NC_002977.6"/>
</dbReference>
<dbReference type="SMR" id="Q608L4"/>
<dbReference type="STRING" id="243233.MCA1476"/>
<dbReference type="CAZy" id="GT5">
    <property type="family name" value="Glycosyltransferase Family 5"/>
</dbReference>
<dbReference type="GeneID" id="88223749"/>
<dbReference type="KEGG" id="mca:MCA1476"/>
<dbReference type="eggNOG" id="COG0297">
    <property type="taxonomic scope" value="Bacteria"/>
</dbReference>
<dbReference type="HOGENOM" id="CLU_009583_18_2_6"/>
<dbReference type="UniPathway" id="UPA00164"/>
<dbReference type="Proteomes" id="UP000006821">
    <property type="component" value="Chromosome"/>
</dbReference>
<dbReference type="GO" id="GO:0005829">
    <property type="term" value="C:cytosol"/>
    <property type="evidence" value="ECO:0007669"/>
    <property type="project" value="TreeGrafter"/>
</dbReference>
<dbReference type="GO" id="GO:0009011">
    <property type="term" value="F:alpha-1,4-glucan glucosyltransferase (ADP-glucose donor) activity"/>
    <property type="evidence" value="ECO:0007669"/>
    <property type="project" value="UniProtKB-UniRule"/>
</dbReference>
<dbReference type="GO" id="GO:0004373">
    <property type="term" value="F:alpha-1,4-glucan glucosyltransferase (UDP-glucose donor) activity"/>
    <property type="evidence" value="ECO:0007669"/>
    <property type="project" value="InterPro"/>
</dbReference>
<dbReference type="GO" id="GO:0005978">
    <property type="term" value="P:glycogen biosynthetic process"/>
    <property type="evidence" value="ECO:0007669"/>
    <property type="project" value="UniProtKB-UniRule"/>
</dbReference>
<dbReference type="CDD" id="cd03791">
    <property type="entry name" value="GT5_Glycogen_synthase_DULL1-like"/>
    <property type="match status" value="1"/>
</dbReference>
<dbReference type="Gene3D" id="3.40.50.2000">
    <property type="entry name" value="Glycogen Phosphorylase B"/>
    <property type="match status" value="2"/>
</dbReference>
<dbReference type="HAMAP" id="MF_00484">
    <property type="entry name" value="Glycogen_synth"/>
    <property type="match status" value="1"/>
</dbReference>
<dbReference type="InterPro" id="IPR001296">
    <property type="entry name" value="Glyco_trans_1"/>
</dbReference>
<dbReference type="InterPro" id="IPR011835">
    <property type="entry name" value="GS/SS"/>
</dbReference>
<dbReference type="InterPro" id="IPR013534">
    <property type="entry name" value="Starch_synth_cat_dom"/>
</dbReference>
<dbReference type="NCBIfam" id="TIGR02095">
    <property type="entry name" value="glgA"/>
    <property type="match status" value="1"/>
</dbReference>
<dbReference type="NCBIfam" id="NF001899">
    <property type="entry name" value="PRK00654.1-2"/>
    <property type="match status" value="1"/>
</dbReference>
<dbReference type="PANTHER" id="PTHR45825:SF11">
    <property type="entry name" value="ALPHA AMYLASE DOMAIN-CONTAINING PROTEIN"/>
    <property type="match status" value="1"/>
</dbReference>
<dbReference type="PANTHER" id="PTHR45825">
    <property type="entry name" value="GRANULE-BOUND STARCH SYNTHASE 1, CHLOROPLASTIC/AMYLOPLASTIC"/>
    <property type="match status" value="1"/>
</dbReference>
<dbReference type="Pfam" id="PF08323">
    <property type="entry name" value="Glyco_transf_5"/>
    <property type="match status" value="1"/>
</dbReference>
<dbReference type="Pfam" id="PF00534">
    <property type="entry name" value="Glycos_transf_1"/>
    <property type="match status" value="1"/>
</dbReference>
<dbReference type="SUPFAM" id="SSF53756">
    <property type="entry name" value="UDP-Glycosyltransferase/glycogen phosphorylase"/>
    <property type="match status" value="1"/>
</dbReference>
<comment type="function">
    <text evidence="1">Synthesizes alpha-1,4-glucan chains using ADP-glucose.</text>
</comment>
<comment type="catalytic activity">
    <reaction evidence="1">
        <text>[(1-&gt;4)-alpha-D-glucosyl](n) + ADP-alpha-D-glucose = [(1-&gt;4)-alpha-D-glucosyl](n+1) + ADP + H(+)</text>
        <dbReference type="Rhea" id="RHEA:18189"/>
        <dbReference type="Rhea" id="RHEA-COMP:9584"/>
        <dbReference type="Rhea" id="RHEA-COMP:9587"/>
        <dbReference type="ChEBI" id="CHEBI:15378"/>
        <dbReference type="ChEBI" id="CHEBI:15444"/>
        <dbReference type="ChEBI" id="CHEBI:57498"/>
        <dbReference type="ChEBI" id="CHEBI:456216"/>
        <dbReference type="EC" id="2.4.1.21"/>
    </reaction>
</comment>
<comment type="pathway">
    <text evidence="1">Glycan biosynthesis; glycogen biosynthesis.</text>
</comment>
<comment type="similarity">
    <text evidence="1">Belongs to the glycosyltransferase 1 family. Bacterial/plant glycogen synthase subfamily.</text>
</comment>
<name>GLGA1_METCA</name>
<protein>
    <recommendedName>
        <fullName evidence="1">Glycogen synthase 1</fullName>
        <ecNumber evidence="1">2.4.1.21</ecNumber>
    </recommendedName>
    <alternativeName>
        <fullName evidence="1">Starch [bacterial glycogen] synthase 1</fullName>
    </alternativeName>
</protein>
<organism>
    <name type="scientific">Methylococcus capsulatus (strain ATCC 33009 / NCIMB 11132 / Bath)</name>
    <dbReference type="NCBI Taxonomy" id="243233"/>
    <lineage>
        <taxon>Bacteria</taxon>
        <taxon>Pseudomonadati</taxon>
        <taxon>Pseudomonadota</taxon>
        <taxon>Gammaproteobacteria</taxon>
        <taxon>Methylococcales</taxon>
        <taxon>Methylococcaceae</taxon>
        <taxon>Methylococcus</taxon>
    </lineage>
</organism>
<accession>Q608L4</accession>
<gene>
    <name evidence="1" type="primary">glgA1</name>
    <name type="ordered locus">MCA1476</name>
</gene>
<proteinExistence type="inferred from homology"/>
<evidence type="ECO:0000255" key="1">
    <source>
        <dbReference type="HAMAP-Rule" id="MF_00484"/>
    </source>
</evidence>
<reference key="1">
    <citation type="journal article" date="2004" name="PLoS Biol.">
        <title>Genomic insights into methanotrophy: the complete genome sequence of Methylococcus capsulatus (Bath).</title>
        <authorList>
            <person name="Ward N.L."/>
            <person name="Larsen O."/>
            <person name="Sakwa J."/>
            <person name="Bruseth L."/>
            <person name="Khouri H.M."/>
            <person name="Durkin A.S."/>
            <person name="Dimitrov G."/>
            <person name="Jiang L."/>
            <person name="Scanlan D."/>
            <person name="Kang K.H."/>
            <person name="Lewis M.R."/>
            <person name="Nelson K.E."/>
            <person name="Methe B.A."/>
            <person name="Wu M."/>
            <person name="Heidelberg J.F."/>
            <person name="Paulsen I.T."/>
            <person name="Fouts D.E."/>
            <person name="Ravel J."/>
            <person name="Tettelin H."/>
            <person name="Ren Q."/>
            <person name="Read T.D."/>
            <person name="DeBoy R.T."/>
            <person name="Seshadri R."/>
            <person name="Salzberg S.L."/>
            <person name="Jensen H.B."/>
            <person name="Birkeland N.K."/>
            <person name="Nelson W.C."/>
            <person name="Dodson R.J."/>
            <person name="Grindhaug S.H."/>
            <person name="Holt I.E."/>
            <person name="Eidhammer I."/>
            <person name="Jonasen I."/>
            <person name="Vanaken S."/>
            <person name="Utterback T.R."/>
            <person name="Feldblyum T.V."/>
            <person name="Fraser C.M."/>
            <person name="Lillehaug J.R."/>
            <person name="Eisen J.A."/>
        </authorList>
    </citation>
    <scope>NUCLEOTIDE SEQUENCE [LARGE SCALE GENOMIC DNA]</scope>
    <source>
        <strain>ATCC 33009 / NCIMB 11132 / Bath</strain>
    </source>
</reference>
<sequence>MKILFVSSEVFPLMKTGGLADVSGSLPAALSALGHDVRILMPAYPEAISAAETPNALSLRQAGSQLTLLSTRLPGTTVPLWLLDAPASFGRFGNPYLAPNGAPWPDNAERFALLARVAVDLTQDRLGLGWKPDVVHCNDWQTGLIPPLLSDEPNRPAVVFTVHNLAYQGLFPYETFQRLALPPRLWKMEALEFYGQLSFIKGGLVFADRINTVSPSYAEEIQTPEFGCGLDGLLRSRKSCLSGILNGIDDVAWNPATDPYLPAPYGPDTLERKKVNRTVLRQRYGLPDDPEVAVLGMVGRMVEQKGVDLLIDILDDLLQLPVQLVVLGSGDKEFERCFERAAAARPERIAVTIGYDEPLAHLIEAGADIFLMPSRFEPCGLNQLYSQRYGTVPIVRKVGGLADTVEDATPERLAAGQASGIVFEPAKPAFLLEAVYRALALYREPEVWRAVCKCGMAKDFSWRKSASRYVGLYREALAGMNAGCSIADPRCAA</sequence>